<name>SACC_BACL7</name>
<evidence type="ECO:0000250" key="1"/>
<evidence type="ECO:0000255" key="2"/>
<evidence type="ECO:0000269" key="3">
    <source>
    </source>
</evidence>
<evidence type="ECO:0000305" key="4"/>
<sequence length="921" mass="101206">MMKWFAKLILSLSLAVVMAASSAAISFGASNSSLDTHASLVTQLDSAASEAAEGKSAMINESAINSNVTGWKLHGKGRMEVTGEGLRLTSDPQENVMAISETVADDFIYEADVMVTDPQADATLLFRSGEDGWSSYMLQLALGAGVIRLKDASGGEGVLNVERKVEAKPGDIYHLRVKAEGTRLQVYWGQQYEPVIDTEAAAHRTGRLGLHVWNGSALFQNIRVSDMSGNTLEPISSQGLWQPDLKGLKGTGEDGLEAKKVFRNHEADVVLEGDLILNGQGSAGLLFRSNAQGTEGYAAVLQGEGERVRVYLKKADGTILHESRVTYPSQRESRHHLEVKAIGERIQIFVDGYEPAAIDMVDTAFPSGYHGVMASSGIAYFQDVYITPYASYYTEKYRPQYHYSPIRGSASDPNGLVYFEGEYHLFHQDGGQWAHAVSRDLIHWKRLPIALPWNDLGHVWSGSAVADTTNASGLFGSSGGKGLIAYYTSYNPDRHNGNQKIGLAYSTDRGRTWKYSEEHPVVIENPGKTGEDPGGWDFRDPKVVRDEANNRWVMVVSGGDHIRLFTSTNLLNWTLTDQFGYGAYIRGGVWECPDLFQLPVEGSKKRKWVLMISTGANPNTQGSDAEYFIGDLTPEGKFINDNPAGTVLKTDWGKEYYASMSFSDMPDGRRIMLAWMTNWDYPFSFPTTGWKGQLSIPRQVSLKETEEGIRMHQTPIEELAQLRSPVLTSPTARWGTSGENLLKGITSGAYEIEAELELPPTGAASEFGFRLREGDGQRTLVGYRAAGSKMFVDRSASGMTDFSDLFSTLHEAPLKPEGNRIKLRILVDESSVEVFGNDGRVVFSDVIFPDPASRGMSFYSEGGKVKVVSLQVHALQHIWREDEAKEPRVVMDTETLELSLGQTKPLFASIDNGQGKGADGI</sequence>
<feature type="signal peptide" evidence="2">
    <location>
        <begin position="1"/>
        <end position="23"/>
    </location>
</feature>
<feature type="chain" id="PRO_0000344252" description="Levanase">
    <location>
        <begin position="24"/>
        <end position="921" status="greater than"/>
    </location>
</feature>
<feature type="active site" evidence="1">
    <location>
        <position position="412"/>
    </location>
</feature>
<feature type="binding site" evidence="1">
    <location>
        <begin position="409"/>
        <end position="412"/>
    </location>
    <ligand>
        <name>substrate</name>
    </ligand>
</feature>
<feature type="binding site" evidence="1">
    <location>
        <position position="428"/>
    </location>
    <ligand>
        <name>substrate</name>
    </ligand>
</feature>
<feature type="binding site" evidence="1">
    <location>
        <begin position="460"/>
        <end position="461"/>
    </location>
    <ligand>
        <name>substrate</name>
    </ligand>
</feature>
<feature type="binding site" evidence="1">
    <location>
        <begin position="539"/>
        <end position="540"/>
    </location>
    <ligand>
        <name>substrate</name>
    </ligand>
</feature>
<feature type="binding site" evidence="1">
    <location>
        <position position="591"/>
    </location>
    <ligand>
        <name>substrate</name>
    </ligand>
</feature>
<feature type="binding site" evidence="1">
    <location>
        <position position="679"/>
    </location>
    <ligand>
        <name>substrate</name>
    </ligand>
</feature>
<feature type="non-terminal residue">
    <location>
        <position position="921"/>
    </location>
</feature>
<protein>
    <recommendedName>
        <fullName>Levanase</fullName>
        <ecNumber>3.2.1.65</ecNumber>
    </recommendedName>
    <alternativeName>
        <fullName>2,6-beta-D-fructan fructanohydrolase</fullName>
    </alternativeName>
    <alternativeName>
        <fullName>Endo-levanase</fullName>
    </alternativeName>
</protein>
<reference key="1">
    <citation type="journal article" date="1997" name="FEMS Microbiol. Lett.">
        <title>Characterization of a novel endo-levanase and its gene from Bacillus sp. L7.</title>
        <authorList>
            <person name="Miasnikov A.N."/>
        </authorList>
    </citation>
    <scope>NUCLEOTIDE SEQUENCE [GENOMIC DNA]</scope>
    <scope>FUNCTION</scope>
    <scope>PH DEPENDENCE</scope>
    <scope>ACTIVITY REGULATION</scope>
    <scope>SUBCELLULAR LOCATION</scope>
</reference>
<reference key="2">
    <citation type="journal article" date="1998" name="FEMS Microbiol. Lett.">
        <title>Levanase gene sequence from strain Bacillus sp. L7.</title>
        <authorList>
            <person name="Naumoff D.G."/>
        </authorList>
    </citation>
    <scope>IDENTIFICATION OF FRAMESHIFT</scope>
</reference>
<proteinExistence type="evidence at protein level"/>
<organism>
    <name type="scientific">Bacillus sp. (strain L7)</name>
    <dbReference type="NCBI Taxonomy" id="62626"/>
    <lineage>
        <taxon>Bacteria</taxon>
        <taxon>Bacillati</taxon>
        <taxon>Bacillota</taxon>
        <taxon>Bacilli</taxon>
        <taxon>Bacillales</taxon>
        <taxon>Bacillaceae</taxon>
        <taxon>Bacillus</taxon>
    </lineage>
</organism>
<keyword id="KW-0119">Carbohydrate metabolism</keyword>
<keyword id="KW-0326">Glycosidase</keyword>
<keyword id="KW-0378">Hydrolase</keyword>
<keyword id="KW-0964">Secreted</keyword>
<keyword id="KW-0732">Signal</keyword>
<dbReference type="EC" id="3.2.1.65"/>
<dbReference type="EMBL" id="Y12619">
    <property type="protein sequence ID" value="CAA73180.1"/>
    <property type="status" value="ALT_FRAME"/>
    <property type="molecule type" value="Genomic_DNA"/>
</dbReference>
<dbReference type="SMR" id="O31411"/>
<dbReference type="CAZy" id="CBM66">
    <property type="family name" value="Carbohydrate-Binding Module Family 66"/>
</dbReference>
<dbReference type="CAZy" id="GH32">
    <property type="family name" value="Glycoside Hydrolase Family 32"/>
</dbReference>
<dbReference type="GO" id="GO:0005737">
    <property type="term" value="C:cytoplasm"/>
    <property type="evidence" value="ECO:0007669"/>
    <property type="project" value="TreeGrafter"/>
</dbReference>
<dbReference type="GO" id="GO:0005576">
    <property type="term" value="C:extracellular region"/>
    <property type="evidence" value="ECO:0007669"/>
    <property type="project" value="UniProtKB-SubCell"/>
</dbReference>
<dbReference type="GO" id="GO:0031219">
    <property type="term" value="F:levanase activity"/>
    <property type="evidence" value="ECO:0007669"/>
    <property type="project" value="UniProtKB-EC"/>
</dbReference>
<dbReference type="GO" id="GO:0004575">
    <property type="term" value="F:sucrose alpha-glucosidase activity"/>
    <property type="evidence" value="ECO:0007669"/>
    <property type="project" value="TreeGrafter"/>
</dbReference>
<dbReference type="GO" id="GO:0005987">
    <property type="term" value="P:sucrose catabolic process"/>
    <property type="evidence" value="ECO:0007669"/>
    <property type="project" value="TreeGrafter"/>
</dbReference>
<dbReference type="CDD" id="cd18622">
    <property type="entry name" value="GH32_Inu-like"/>
    <property type="match status" value="1"/>
</dbReference>
<dbReference type="Gene3D" id="2.60.120.560">
    <property type="entry name" value="Exo-inulinase, domain 1"/>
    <property type="match status" value="3"/>
</dbReference>
<dbReference type="Gene3D" id="2.115.10.20">
    <property type="entry name" value="Glycosyl hydrolase domain, family 43"/>
    <property type="match status" value="1"/>
</dbReference>
<dbReference type="InterPro" id="IPR010496">
    <property type="entry name" value="3-keto-disaccharide_hydrolase"/>
</dbReference>
<dbReference type="InterPro" id="IPR013320">
    <property type="entry name" value="ConA-like_dom_sf"/>
</dbReference>
<dbReference type="InterPro" id="IPR001362">
    <property type="entry name" value="Glyco_hydro_32"/>
</dbReference>
<dbReference type="InterPro" id="IPR013189">
    <property type="entry name" value="Glyco_hydro_32_C"/>
</dbReference>
<dbReference type="InterPro" id="IPR013148">
    <property type="entry name" value="Glyco_hydro_32_N"/>
</dbReference>
<dbReference type="InterPro" id="IPR023296">
    <property type="entry name" value="Glyco_hydro_beta-prop_sf"/>
</dbReference>
<dbReference type="PANTHER" id="PTHR42800">
    <property type="entry name" value="EXOINULINASE INUD (AFU_ORTHOLOGUE AFUA_5G00480)"/>
    <property type="match status" value="1"/>
</dbReference>
<dbReference type="PANTHER" id="PTHR42800:SF1">
    <property type="entry name" value="EXOINULINASE INUD (AFU_ORTHOLOGUE AFUA_5G00480)"/>
    <property type="match status" value="1"/>
</dbReference>
<dbReference type="Pfam" id="PF06439">
    <property type="entry name" value="3keto-disac_hyd"/>
    <property type="match status" value="1"/>
</dbReference>
<dbReference type="Pfam" id="PF08244">
    <property type="entry name" value="Glyco_hydro_32C"/>
    <property type="match status" value="1"/>
</dbReference>
<dbReference type="Pfam" id="PF00251">
    <property type="entry name" value="Glyco_hydro_32N"/>
    <property type="match status" value="1"/>
</dbReference>
<dbReference type="SMART" id="SM00640">
    <property type="entry name" value="Glyco_32"/>
    <property type="match status" value="1"/>
</dbReference>
<dbReference type="SUPFAM" id="SSF75005">
    <property type="entry name" value="Arabinanase/levansucrase/invertase"/>
    <property type="match status" value="1"/>
</dbReference>
<dbReference type="SUPFAM" id="SSF49899">
    <property type="entry name" value="Concanavalin A-like lectins/glucanases"/>
    <property type="match status" value="1"/>
</dbReference>
<comment type="function">
    <text evidence="3">Catalyzes the hydrolysis of levan with endo-type specificity. The products of levan hydrolysis are a mixture of fructose and a series of fructooligosaccharides up to 12-mer, with levantriose being the major oligosaccharide obtained. Is not active towards sucrose.</text>
</comment>
<comment type="catalytic activity">
    <reaction>
        <text>Random hydrolysis of (2-&gt;6)-beta-D-fructofuranosidic linkages in (2-&gt;6)-beta-D-fructans (levans) containing more than 3 fructose units.</text>
        <dbReference type="EC" id="3.2.1.65"/>
    </reaction>
</comment>
<comment type="activity regulation">
    <text evidence="3">Is completely inhibited by low concentrations of heavy metal ions, while Ca(2+) and Mg(2+) or chelating agents such as EDTA neither inhibit nor activate the enzyme to any significant extent.</text>
</comment>
<comment type="biophysicochemical properties">
    <phDependence>
        <text evidence="3">Optimum pH is about 5.5 at 50 degrees Celsius and shows an apparent shift towards higher pH values at higher temperatures.</text>
    </phDependence>
</comment>
<comment type="subcellular location">
    <subcellularLocation>
        <location evidence="3">Secreted</location>
    </subcellularLocation>
</comment>
<comment type="similarity">
    <text evidence="4">Belongs to the glycosyl hydrolase 32 family.</text>
</comment>
<comment type="caution">
    <text evidence="4">Functional characterization has been done on a chimeric protein carrying at its C-terminus a fragment of the cloning vector instead of the levanase sequence.</text>
</comment>
<comment type="sequence caution" evidence="4">
    <conflict type="frameshift">
        <sequence resource="EMBL-CDS" id="CAA73180"/>
    </conflict>
    <text>The exact location of the frameshift is not clear.</text>
</comment>
<accession>O31411</accession>